<accession>Q3YW04</accession>
<keyword id="KW-0328">Glycosyltransferase</keyword>
<keyword id="KW-0460">Magnesium</keyword>
<keyword id="KW-0665">Pyrimidine biosynthesis</keyword>
<keyword id="KW-1185">Reference proteome</keyword>
<keyword id="KW-0808">Transferase</keyword>
<evidence type="ECO:0000255" key="1">
    <source>
        <dbReference type="HAMAP-Rule" id="MF_01208"/>
    </source>
</evidence>
<gene>
    <name evidence="1" type="primary">pyrE</name>
    <name type="ordered locus">SSON_3764</name>
</gene>
<reference key="1">
    <citation type="journal article" date="2005" name="Nucleic Acids Res.">
        <title>Genome dynamics and diversity of Shigella species, the etiologic agents of bacillary dysentery.</title>
        <authorList>
            <person name="Yang F."/>
            <person name="Yang J."/>
            <person name="Zhang X."/>
            <person name="Chen L."/>
            <person name="Jiang Y."/>
            <person name="Yan Y."/>
            <person name="Tang X."/>
            <person name="Wang J."/>
            <person name="Xiong Z."/>
            <person name="Dong J."/>
            <person name="Xue Y."/>
            <person name="Zhu Y."/>
            <person name="Xu X."/>
            <person name="Sun L."/>
            <person name="Chen S."/>
            <person name="Nie H."/>
            <person name="Peng J."/>
            <person name="Xu J."/>
            <person name="Wang Y."/>
            <person name="Yuan Z."/>
            <person name="Wen Y."/>
            <person name="Yao Z."/>
            <person name="Shen Y."/>
            <person name="Qiang B."/>
            <person name="Hou Y."/>
            <person name="Yu J."/>
            <person name="Jin Q."/>
        </authorList>
    </citation>
    <scope>NUCLEOTIDE SEQUENCE [LARGE SCALE GENOMIC DNA]</scope>
    <source>
        <strain>Ss046</strain>
    </source>
</reference>
<organism>
    <name type="scientific">Shigella sonnei (strain Ss046)</name>
    <dbReference type="NCBI Taxonomy" id="300269"/>
    <lineage>
        <taxon>Bacteria</taxon>
        <taxon>Pseudomonadati</taxon>
        <taxon>Pseudomonadota</taxon>
        <taxon>Gammaproteobacteria</taxon>
        <taxon>Enterobacterales</taxon>
        <taxon>Enterobacteriaceae</taxon>
        <taxon>Shigella</taxon>
    </lineage>
</organism>
<name>PYRE_SHISS</name>
<dbReference type="EC" id="2.4.2.10" evidence="1"/>
<dbReference type="EMBL" id="CP000038">
    <property type="protein sequence ID" value="AAZ90308.1"/>
    <property type="molecule type" value="Genomic_DNA"/>
</dbReference>
<dbReference type="RefSeq" id="WP_000806182.1">
    <property type="nucleotide sequence ID" value="NC_007384.1"/>
</dbReference>
<dbReference type="SMR" id="Q3YW04"/>
<dbReference type="GeneID" id="93778357"/>
<dbReference type="KEGG" id="ssn:SSON_3764"/>
<dbReference type="HOGENOM" id="CLU_074878_0_1_6"/>
<dbReference type="UniPathway" id="UPA00070">
    <property type="reaction ID" value="UER00119"/>
</dbReference>
<dbReference type="Proteomes" id="UP000002529">
    <property type="component" value="Chromosome"/>
</dbReference>
<dbReference type="GO" id="GO:0005737">
    <property type="term" value="C:cytoplasm"/>
    <property type="evidence" value="ECO:0007669"/>
    <property type="project" value="TreeGrafter"/>
</dbReference>
<dbReference type="GO" id="GO:0000287">
    <property type="term" value="F:magnesium ion binding"/>
    <property type="evidence" value="ECO:0007669"/>
    <property type="project" value="UniProtKB-UniRule"/>
</dbReference>
<dbReference type="GO" id="GO:0004588">
    <property type="term" value="F:orotate phosphoribosyltransferase activity"/>
    <property type="evidence" value="ECO:0007669"/>
    <property type="project" value="UniProtKB-UniRule"/>
</dbReference>
<dbReference type="GO" id="GO:0006207">
    <property type="term" value="P:'de novo' pyrimidine nucleobase biosynthetic process"/>
    <property type="evidence" value="ECO:0007669"/>
    <property type="project" value="TreeGrafter"/>
</dbReference>
<dbReference type="GO" id="GO:0044205">
    <property type="term" value="P:'de novo' UMP biosynthetic process"/>
    <property type="evidence" value="ECO:0007669"/>
    <property type="project" value="UniProtKB-UniRule"/>
</dbReference>
<dbReference type="GO" id="GO:0046132">
    <property type="term" value="P:pyrimidine ribonucleoside biosynthetic process"/>
    <property type="evidence" value="ECO:0007669"/>
    <property type="project" value="TreeGrafter"/>
</dbReference>
<dbReference type="CDD" id="cd06223">
    <property type="entry name" value="PRTases_typeI"/>
    <property type="match status" value="1"/>
</dbReference>
<dbReference type="FunFam" id="3.40.50.2020:FF:000008">
    <property type="entry name" value="Orotate phosphoribosyltransferase"/>
    <property type="match status" value="1"/>
</dbReference>
<dbReference type="Gene3D" id="3.40.50.2020">
    <property type="match status" value="1"/>
</dbReference>
<dbReference type="HAMAP" id="MF_01208">
    <property type="entry name" value="PyrE"/>
    <property type="match status" value="1"/>
</dbReference>
<dbReference type="InterPro" id="IPR023031">
    <property type="entry name" value="OPRT"/>
</dbReference>
<dbReference type="InterPro" id="IPR004467">
    <property type="entry name" value="Or_phspho_trans_dom"/>
</dbReference>
<dbReference type="InterPro" id="IPR000836">
    <property type="entry name" value="PRibTrfase_dom"/>
</dbReference>
<dbReference type="InterPro" id="IPR029057">
    <property type="entry name" value="PRTase-like"/>
</dbReference>
<dbReference type="NCBIfam" id="TIGR00336">
    <property type="entry name" value="pyrE"/>
    <property type="match status" value="1"/>
</dbReference>
<dbReference type="PANTHER" id="PTHR46683">
    <property type="entry name" value="OROTATE PHOSPHORIBOSYLTRANSFERASE 1-RELATED"/>
    <property type="match status" value="1"/>
</dbReference>
<dbReference type="PANTHER" id="PTHR46683:SF1">
    <property type="entry name" value="OROTATE PHOSPHORIBOSYLTRANSFERASE 1-RELATED"/>
    <property type="match status" value="1"/>
</dbReference>
<dbReference type="Pfam" id="PF00156">
    <property type="entry name" value="Pribosyltran"/>
    <property type="match status" value="1"/>
</dbReference>
<dbReference type="SUPFAM" id="SSF53271">
    <property type="entry name" value="PRTase-like"/>
    <property type="match status" value="1"/>
</dbReference>
<dbReference type="PROSITE" id="PS00103">
    <property type="entry name" value="PUR_PYR_PR_TRANSFER"/>
    <property type="match status" value="1"/>
</dbReference>
<comment type="function">
    <text evidence="1">Catalyzes the transfer of a ribosyl phosphate group from 5-phosphoribose 1-diphosphate to orotate, leading to the formation of orotidine monophosphate (OMP).</text>
</comment>
<comment type="catalytic activity">
    <reaction evidence="1">
        <text>orotidine 5'-phosphate + diphosphate = orotate + 5-phospho-alpha-D-ribose 1-diphosphate</text>
        <dbReference type="Rhea" id="RHEA:10380"/>
        <dbReference type="ChEBI" id="CHEBI:30839"/>
        <dbReference type="ChEBI" id="CHEBI:33019"/>
        <dbReference type="ChEBI" id="CHEBI:57538"/>
        <dbReference type="ChEBI" id="CHEBI:58017"/>
        <dbReference type="EC" id="2.4.2.10"/>
    </reaction>
</comment>
<comment type="cofactor">
    <cofactor evidence="1">
        <name>Mg(2+)</name>
        <dbReference type="ChEBI" id="CHEBI:18420"/>
    </cofactor>
</comment>
<comment type="pathway">
    <text evidence="1">Pyrimidine metabolism; UMP biosynthesis via de novo pathway; UMP from orotate: step 1/2.</text>
</comment>
<comment type="subunit">
    <text evidence="1">Homodimer.</text>
</comment>
<comment type="similarity">
    <text evidence="1">Belongs to the purine/pyrimidine phosphoribosyltransferase family. PyrE subfamily.</text>
</comment>
<proteinExistence type="inferred from homology"/>
<sequence>MKPYQRQFIEFALSKQVLKFGEFTLKSGRKSPYFFNAGLFNTGRDLALLGRFYAEALVDSGIEFDLLFGPAYKGIPIATTTAVALAEHHDLDLPYCFNRKEAKNHGEGGNLVGSALQGRVMLVDDVITAGTAIRESMEIIQANGATLAGVLISLDRQERGRSEISAIQEVERDYNCKVISIITLKDLIAYLEEKPEMAEHLAAVKAYREEFGV</sequence>
<protein>
    <recommendedName>
        <fullName evidence="1">Orotate phosphoribosyltransferase</fullName>
        <shortName evidence="1">OPRT</shortName>
        <shortName evidence="1">OPRTase</shortName>
        <ecNumber evidence="1">2.4.2.10</ecNumber>
    </recommendedName>
</protein>
<feature type="chain" id="PRO_1000066299" description="Orotate phosphoribosyltransferase">
    <location>
        <begin position="1"/>
        <end position="213"/>
    </location>
</feature>
<feature type="binding site" description="in other chain" evidence="1">
    <location>
        <position position="26"/>
    </location>
    <ligand>
        <name>5-phospho-alpha-D-ribose 1-diphosphate</name>
        <dbReference type="ChEBI" id="CHEBI:58017"/>
        <note>ligand shared between dimeric partners</note>
    </ligand>
</feature>
<feature type="binding site" evidence="1">
    <location>
        <begin position="34"/>
        <end position="35"/>
    </location>
    <ligand>
        <name>orotate</name>
        <dbReference type="ChEBI" id="CHEBI:30839"/>
    </ligand>
</feature>
<feature type="binding site" description="in other chain" evidence="1">
    <location>
        <begin position="72"/>
        <end position="73"/>
    </location>
    <ligand>
        <name>5-phospho-alpha-D-ribose 1-diphosphate</name>
        <dbReference type="ChEBI" id="CHEBI:58017"/>
        <note>ligand shared between dimeric partners</note>
    </ligand>
</feature>
<feature type="binding site" evidence="1">
    <location>
        <position position="99"/>
    </location>
    <ligand>
        <name>5-phospho-alpha-D-ribose 1-diphosphate</name>
        <dbReference type="ChEBI" id="CHEBI:58017"/>
        <note>ligand shared between dimeric partners</note>
    </ligand>
</feature>
<feature type="binding site" description="in other chain" evidence="1">
    <location>
        <position position="100"/>
    </location>
    <ligand>
        <name>5-phospho-alpha-D-ribose 1-diphosphate</name>
        <dbReference type="ChEBI" id="CHEBI:58017"/>
        <note>ligand shared between dimeric partners</note>
    </ligand>
</feature>
<feature type="binding site" evidence="1">
    <location>
        <position position="103"/>
    </location>
    <ligand>
        <name>5-phospho-alpha-D-ribose 1-diphosphate</name>
        <dbReference type="ChEBI" id="CHEBI:58017"/>
        <note>ligand shared between dimeric partners</note>
    </ligand>
</feature>
<feature type="binding site" evidence="1">
    <location>
        <position position="105"/>
    </location>
    <ligand>
        <name>5-phospho-alpha-D-ribose 1-diphosphate</name>
        <dbReference type="ChEBI" id="CHEBI:58017"/>
        <note>ligand shared between dimeric partners</note>
    </ligand>
</feature>
<feature type="binding site" description="in other chain" evidence="1">
    <location>
        <begin position="124"/>
        <end position="132"/>
    </location>
    <ligand>
        <name>5-phospho-alpha-D-ribose 1-diphosphate</name>
        <dbReference type="ChEBI" id="CHEBI:58017"/>
        <note>ligand shared between dimeric partners</note>
    </ligand>
</feature>
<feature type="binding site" evidence="1">
    <location>
        <position position="128"/>
    </location>
    <ligand>
        <name>orotate</name>
        <dbReference type="ChEBI" id="CHEBI:30839"/>
    </ligand>
</feature>
<feature type="binding site" evidence="1">
    <location>
        <position position="156"/>
    </location>
    <ligand>
        <name>orotate</name>
        <dbReference type="ChEBI" id="CHEBI:30839"/>
    </ligand>
</feature>